<organism>
    <name type="scientific">Homarus americanus</name>
    <name type="common">American lobster</name>
    <dbReference type="NCBI Taxonomy" id="6706"/>
    <lineage>
        <taxon>Eukaryota</taxon>
        <taxon>Metazoa</taxon>
        <taxon>Ecdysozoa</taxon>
        <taxon>Arthropoda</taxon>
        <taxon>Crustacea</taxon>
        <taxon>Multicrustacea</taxon>
        <taxon>Malacostraca</taxon>
        <taxon>Eumalacostraca</taxon>
        <taxon>Eucarida</taxon>
        <taxon>Decapoda</taxon>
        <taxon>Pleocyemata</taxon>
        <taxon>Astacidea</taxon>
        <taxon>Nephropoidea</taxon>
        <taxon>Nephropidae</taxon>
        <taxon>Homarus</taxon>
    </lineage>
</organism>
<comment type="tissue specificity">
    <text>Arthrodial membrane.</text>
</comment>
<proteinExistence type="evidence at protein level"/>
<accession>P81386</accession>
<protein>
    <recommendedName>
        <fullName>Cuticle protein AMP2</fullName>
    </recommendedName>
    <alternativeName>
        <fullName>HA-AMP2</fullName>
    </alternativeName>
</protein>
<evidence type="ECO:0000255" key="1">
    <source>
        <dbReference type="PROSITE-ProRule" id="PRU00497"/>
    </source>
</evidence>
<evidence type="ECO:0000256" key="2">
    <source>
        <dbReference type="SAM" id="MobiDB-lite"/>
    </source>
</evidence>
<keyword id="KW-0193">Cuticle</keyword>
<keyword id="KW-0903">Direct protein sequencing</keyword>
<dbReference type="OrthoDB" id="6359642at2759"/>
<dbReference type="GO" id="GO:0062129">
    <property type="term" value="C:chitin-based extracellular matrix"/>
    <property type="evidence" value="ECO:0007669"/>
    <property type="project" value="TreeGrafter"/>
</dbReference>
<dbReference type="GO" id="GO:0008010">
    <property type="term" value="F:structural constituent of chitin-based larval cuticle"/>
    <property type="evidence" value="ECO:0007669"/>
    <property type="project" value="TreeGrafter"/>
</dbReference>
<dbReference type="InterPro" id="IPR031311">
    <property type="entry name" value="CHIT_BIND_RR_consensus"/>
</dbReference>
<dbReference type="InterPro" id="IPR050468">
    <property type="entry name" value="Cuticle_Struct_Prot"/>
</dbReference>
<dbReference type="InterPro" id="IPR000618">
    <property type="entry name" value="Insect_cuticle"/>
</dbReference>
<dbReference type="PANTHER" id="PTHR10380">
    <property type="entry name" value="CUTICLE PROTEIN"/>
    <property type="match status" value="1"/>
</dbReference>
<dbReference type="PANTHER" id="PTHR10380:SF237">
    <property type="entry name" value="CUTICULAR PROTEIN 65AU, ISOFORM A-RELATED"/>
    <property type="match status" value="1"/>
</dbReference>
<dbReference type="Pfam" id="PF00379">
    <property type="entry name" value="Chitin_bind_4"/>
    <property type="match status" value="1"/>
</dbReference>
<dbReference type="PRINTS" id="PR00947">
    <property type="entry name" value="CUTICLE"/>
</dbReference>
<dbReference type="PROSITE" id="PS00233">
    <property type="entry name" value="CHIT_BIND_RR_1"/>
    <property type="match status" value="1"/>
</dbReference>
<dbReference type="PROSITE" id="PS51155">
    <property type="entry name" value="CHIT_BIND_RR_2"/>
    <property type="match status" value="1"/>
</dbReference>
<sequence length="105" mass="11692">DRDAQTLTDERSDQGDGNFRYEFETSNGIYTQKTGTPGSEGQSNYQGSFRFPLEDGTIAEVSYIADEYGFQPSSDLLPVGPPAPPHVQRLLEIAEDQRRQGITFD</sequence>
<name>CU02_HOMAM</name>
<reference key="1">
    <citation type="journal article" date="1998" name="Comp. Biochem. Physiol.">
        <title>Characterization of exoskeletal proteins from the American lobster, Homarus americanus.</title>
        <authorList>
            <person name="Nousiainen M."/>
            <person name="Rafn K."/>
            <person name="Skou L."/>
            <person name="Roepstorff P."/>
            <person name="Andersen S.O."/>
        </authorList>
    </citation>
    <scope>PROTEIN SEQUENCE</scope>
    <source>
        <tissue>Cuticle</tissue>
    </source>
</reference>
<feature type="chain" id="PRO_0000196152" description="Cuticle protein AMP2">
    <location>
        <begin position="1"/>
        <end position="105"/>
    </location>
</feature>
<feature type="domain" description="Chitin-binding type R&amp;R" evidence="1">
    <location>
        <begin position="16"/>
        <end position="81"/>
    </location>
</feature>
<feature type="region of interest" description="Disordered" evidence="2">
    <location>
        <begin position="1"/>
        <end position="21"/>
    </location>
</feature>